<comment type="function">
    <text evidence="1 3">Snake venom phospholipase A2 homolog that lacks enzymatic activity (PubMed:10930841). Is myotoxic (By similarity). Has a strong indirect hemolytic activity and anticoagulant activity (PubMed:10930841). A model of myotoxic mechanism has been proposed: an apo Lys49-PLA2 is activated by the entrance of a hydrophobic molecule (e.g. fatty acid) at the hydrophobic channel of the protein leading to a reorientation of a monomer (By similarity). This reorientation causes a transition between 'inactive' to 'active' states, causing alignment of C-terminal and membrane-docking sites (MDoS) side-by-side and putting the membrane-disruption sites (MDiS) in the same plane, exposed to solvent and in a symmetric position for both monomers (By similarity). The MDoS region stabilizes the toxin on membrane by the interaction of charged residues with phospholipid head groups (By similarity). Subsequently, the MDiS region destabilizes the membrane with penetration of hydrophobic residues (By similarity). This insertion causes a disorganization of the membrane, allowing an uncontrolled influx of ions (i.e. calcium and sodium), and eventually triggering irreversible intracellular alterations and cell death (By similarity).</text>
</comment>
<comment type="subunit">
    <text evidence="3 4">Monomer.</text>
</comment>
<comment type="subcellular location">
    <subcellularLocation>
        <location evidence="3">Secreted</location>
    </subcellularLocation>
</comment>
<comment type="tissue specificity">
    <text evidence="9">Expressed by the venom gland.</text>
</comment>
<comment type="mass spectrometry" mass="13938.0" method="Electrospray" evidence="3"/>
<comment type="similarity">
    <text evidence="8">Belongs to the phospholipase A2 family. Group II subfamily. K49 sub-subfamily.</text>
</comment>
<comment type="caution">
    <text evidence="8">Does not bind calcium as one of the calcium-binding sites is lost (Asp-&gt;Lys in position 64, which corresponds to 'Lys-49' in the current nomenclature).</text>
</comment>
<protein>
    <recommendedName>
        <fullName evidence="5 7">Basic phospholipase A2 homolog acutohaemolysin</fullName>
        <shortName>svPLA2 homolog</shortName>
    </recommendedName>
    <alternativeName>
        <fullName evidence="6">Dac-K49</fullName>
    </alternativeName>
</protein>
<proteinExistence type="evidence at protein level"/>
<dbReference type="EMBL" id="AJ223188">
    <property type="protein sequence ID" value="CAA11159.1"/>
    <property type="molecule type" value="mRNA"/>
</dbReference>
<dbReference type="EMBL" id="AF269132">
    <property type="protein sequence ID" value="AAL36975.1"/>
    <property type="molecule type" value="mRNA"/>
</dbReference>
<dbReference type="PDB" id="1MC2">
    <property type="method" value="X-ray"/>
    <property type="resolution" value="0.85 A"/>
    <property type="chains" value="A=17-138"/>
</dbReference>
<dbReference type="PDB" id="1MG6">
    <property type="method" value="X-ray"/>
    <property type="resolution" value="1.60 A"/>
    <property type="chains" value="A=17-138"/>
</dbReference>
<dbReference type="PDBsum" id="1MC2"/>
<dbReference type="PDBsum" id="1MG6"/>
<dbReference type="SMR" id="O57385"/>
<dbReference type="EvolutionaryTrace" id="O57385"/>
<dbReference type="GO" id="GO:0005576">
    <property type="term" value="C:extracellular region"/>
    <property type="evidence" value="ECO:0007669"/>
    <property type="project" value="UniProtKB-SubCell"/>
</dbReference>
<dbReference type="GO" id="GO:0005509">
    <property type="term" value="F:calcium ion binding"/>
    <property type="evidence" value="ECO:0007669"/>
    <property type="project" value="InterPro"/>
</dbReference>
<dbReference type="GO" id="GO:0047498">
    <property type="term" value="F:calcium-dependent phospholipase A2 activity"/>
    <property type="evidence" value="ECO:0007669"/>
    <property type="project" value="TreeGrafter"/>
</dbReference>
<dbReference type="GO" id="GO:0005543">
    <property type="term" value="F:phospholipid binding"/>
    <property type="evidence" value="ECO:0007669"/>
    <property type="project" value="TreeGrafter"/>
</dbReference>
<dbReference type="GO" id="GO:0090729">
    <property type="term" value="F:toxin activity"/>
    <property type="evidence" value="ECO:0007669"/>
    <property type="project" value="UniProtKB-KW"/>
</dbReference>
<dbReference type="GO" id="GO:0050482">
    <property type="term" value="P:arachidonate secretion"/>
    <property type="evidence" value="ECO:0007669"/>
    <property type="project" value="InterPro"/>
</dbReference>
<dbReference type="GO" id="GO:0016042">
    <property type="term" value="P:lipid catabolic process"/>
    <property type="evidence" value="ECO:0007669"/>
    <property type="project" value="InterPro"/>
</dbReference>
<dbReference type="GO" id="GO:0042130">
    <property type="term" value="P:negative regulation of T cell proliferation"/>
    <property type="evidence" value="ECO:0007669"/>
    <property type="project" value="TreeGrafter"/>
</dbReference>
<dbReference type="GO" id="GO:0006644">
    <property type="term" value="P:phospholipid metabolic process"/>
    <property type="evidence" value="ECO:0007669"/>
    <property type="project" value="InterPro"/>
</dbReference>
<dbReference type="CDD" id="cd00125">
    <property type="entry name" value="PLA2c"/>
    <property type="match status" value="1"/>
</dbReference>
<dbReference type="FunFam" id="1.20.90.10:FF:000001">
    <property type="entry name" value="Basic phospholipase A2 homolog"/>
    <property type="match status" value="1"/>
</dbReference>
<dbReference type="Gene3D" id="1.20.90.10">
    <property type="entry name" value="Phospholipase A2 domain"/>
    <property type="match status" value="1"/>
</dbReference>
<dbReference type="InterPro" id="IPR001211">
    <property type="entry name" value="PLipase_A2"/>
</dbReference>
<dbReference type="InterPro" id="IPR033112">
    <property type="entry name" value="PLipase_A2_Asp_AS"/>
</dbReference>
<dbReference type="InterPro" id="IPR016090">
    <property type="entry name" value="PLipase_A2_dom"/>
</dbReference>
<dbReference type="InterPro" id="IPR036444">
    <property type="entry name" value="PLipase_A2_dom_sf"/>
</dbReference>
<dbReference type="InterPro" id="IPR033113">
    <property type="entry name" value="PLipase_A2_His_AS"/>
</dbReference>
<dbReference type="PANTHER" id="PTHR11716">
    <property type="entry name" value="PHOSPHOLIPASE A2 FAMILY MEMBER"/>
    <property type="match status" value="1"/>
</dbReference>
<dbReference type="PANTHER" id="PTHR11716:SF9">
    <property type="entry name" value="PHOSPHOLIPASE A2, MEMBRANE ASSOCIATED"/>
    <property type="match status" value="1"/>
</dbReference>
<dbReference type="Pfam" id="PF00068">
    <property type="entry name" value="Phospholip_A2_1"/>
    <property type="match status" value="1"/>
</dbReference>
<dbReference type="PRINTS" id="PR00389">
    <property type="entry name" value="PHPHLIPASEA2"/>
</dbReference>
<dbReference type="SMART" id="SM00085">
    <property type="entry name" value="PA2c"/>
    <property type="match status" value="1"/>
</dbReference>
<dbReference type="SUPFAM" id="SSF48619">
    <property type="entry name" value="Phospholipase A2, PLA2"/>
    <property type="match status" value="1"/>
</dbReference>
<dbReference type="PROSITE" id="PS00119">
    <property type="entry name" value="PA2_ASP"/>
    <property type="match status" value="1"/>
</dbReference>
<dbReference type="PROSITE" id="PS00118">
    <property type="entry name" value="PA2_HIS"/>
    <property type="match status" value="1"/>
</dbReference>
<organism>
    <name type="scientific">Deinagkistrodon acutus</name>
    <name type="common">Hundred-pace snake</name>
    <name type="synonym">Agkistrodon acutus</name>
    <dbReference type="NCBI Taxonomy" id="36307"/>
    <lineage>
        <taxon>Eukaryota</taxon>
        <taxon>Metazoa</taxon>
        <taxon>Chordata</taxon>
        <taxon>Craniata</taxon>
        <taxon>Vertebrata</taxon>
        <taxon>Euteleostomi</taxon>
        <taxon>Lepidosauria</taxon>
        <taxon>Squamata</taxon>
        <taxon>Bifurcata</taxon>
        <taxon>Unidentata</taxon>
        <taxon>Episquamata</taxon>
        <taxon>Toxicofera</taxon>
        <taxon>Serpentes</taxon>
        <taxon>Colubroidea</taxon>
        <taxon>Viperidae</taxon>
        <taxon>Crotalinae</taxon>
        <taxon>Deinagkistrodon</taxon>
    </lineage>
</organism>
<sequence length="138" mass="15777">MRALWIVAVLLVGVEGSLFELGKMIWQETGKNPVKNYGLYGCNCGVGGRGEPLDATDRCCFVHKCCYKKLTDCDSKKDRYSYKWKNKAIVCGKNQPCMQEMCECDKAFAICLRENLDTYNKSFRYHLKPSCKKTSEQC</sequence>
<feature type="signal peptide" evidence="3">
    <location>
        <begin position="1"/>
        <end position="16"/>
    </location>
</feature>
<feature type="chain" id="PRO_0000022774" description="Basic phospholipase A2 homolog acutohaemolysin">
    <location>
        <begin position="17"/>
        <end position="138"/>
    </location>
</feature>
<feature type="region of interest" description="Important for membrane-damaging activities in eukaryotes and bacteria; heparin-binding" evidence="2">
    <location>
        <begin position="121"/>
        <end position="133"/>
    </location>
</feature>
<feature type="site" description="Important residue of the cationic membrane-docking site (MDoS)" evidence="1">
    <location>
        <position position="121"/>
    </location>
</feature>
<feature type="site" description="Important residue of the cationic membrane-docking site (MDoS)" evidence="1">
    <location>
        <position position="124"/>
    </location>
</feature>
<feature type="site" description="Hydrophobic membrane-disruption site (MDiS)" evidence="1">
    <location>
        <position position="127"/>
    </location>
</feature>
<feature type="site" description="Cationic membrane-docking site (MDoS)" evidence="1">
    <location>
        <position position="128"/>
    </location>
</feature>
<feature type="site" description="Cationic membrane-docking site (MDoS)" evidence="1">
    <location>
        <position position="133"/>
    </location>
</feature>
<feature type="disulfide bond" evidence="4 10 11">
    <location>
        <begin position="42"/>
        <end position="131"/>
    </location>
</feature>
<feature type="disulfide bond" evidence="4 10 11">
    <location>
        <begin position="44"/>
        <end position="60"/>
    </location>
</feature>
<feature type="disulfide bond" evidence="4 10 11">
    <location>
        <begin position="59"/>
        <end position="111"/>
    </location>
</feature>
<feature type="disulfide bond" evidence="4 10 11">
    <location>
        <begin position="65"/>
        <end position="138"/>
    </location>
</feature>
<feature type="disulfide bond" evidence="4 10 11">
    <location>
        <begin position="66"/>
        <end position="104"/>
    </location>
</feature>
<feature type="disulfide bond" evidence="4 10 11">
    <location>
        <begin position="73"/>
        <end position="97"/>
    </location>
</feature>
<feature type="disulfide bond" evidence="4 10 11">
    <location>
        <begin position="91"/>
        <end position="102"/>
    </location>
</feature>
<feature type="sequence conflict" description="In Ref. 2; AAL36975." evidence="8" ref="2">
    <original>S</original>
    <variation>L</variation>
    <location>
        <position position="130"/>
    </location>
</feature>
<feature type="helix" evidence="12">
    <location>
        <begin position="18"/>
        <end position="29"/>
    </location>
</feature>
<feature type="helix" evidence="12">
    <location>
        <begin position="33"/>
        <end position="37"/>
    </location>
</feature>
<feature type="turn" evidence="12">
    <location>
        <begin position="41"/>
        <end position="43"/>
    </location>
</feature>
<feature type="strand" evidence="12">
    <location>
        <begin position="44"/>
        <end position="47"/>
    </location>
</feature>
<feature type="helix" evidence="12">
    <location>
        <begin position="55"/>
        <end position="67"/>
    </location>
</feature>
<feature type="strand" evidence="12">
    <location>
        <begin position="71"/>
        <end position="73"/>
    </location>
</feature>
<feature type="turn" evidence="12">
    <location>
        <begin position="75"/>
        <end position="77"/>
    </location>
</feature>
<feature type="strand" evidence="12">
    <location>
        <begin position="82"/>
        <end position="85"/>
    </location>
</feature>
<feature type="strand" evidence="12">
    <location>
        <begin position="88"/>
        <end position="91"/>
    </location>
</feature>
<feature type="helix" evidence="12">
    <location>
        <begin position="96"/>
        <end position="114"/>
    </location>
</feature>
<feature type="helix" evidence="12">
    <location>
        <begin position="115"/>
        <end position="118"/>
    </location>
</feature>
<feature type="helix" evidence="12">
    <location>
        <begin position="121"/>
        <end position="123"/>
    </location>
</feature>
<feature type="helix" evidence="12">
    <location>
        <begin position="128"/>
        <end position="130"/>
    </location>
</feature>
<keyword id="KW-0002">3D-structure</keyword>
<keyword id="KW-0903">Direct protein sequencing</keyword>
<keyword id="KW-1015">Disulfide bond</keyword>
<keyword id="KW-0959">Myotoxin</keyword>
<keyword id="KW-0964">Secreted</keyword>
<keyword id="KW-0732">Signal</keyword>
<keyword id="KW-0800">Toxin</keyword>
<evidence type="ECO:0000250" key="1">
    <source>
        <dbReference type="UniProtKB" id="I6L8L6"/>
    </source>
</evidence>
<evidence type="ECO:0000250" key="2">
    <source>
        <dbReference type="UniProtKB" id="P24605"/>
    </source>
</evidence>
<evidence type="ECO:0000269" key="3">
    <source>
    </source>
</evidence>
<evidence type="ECO:0000269" key="4">
    <source>
    </source>
</evidence>
<evidence type="ECO:0000303" key="5">
    <source>
    </source>
</evidence>
<evidence type="ECO:0000303" key="6">
    <source>
    </source>
</evidence>
<evidence type="ECO:0000303" key="7">
    <source>
    </source>
</evidence>
<evidence type="ECO:0000305" key="8"/>
<evidence type="ECO:0000305" key="9">
    <source>
    </source>
</evidence>
<evidence type="ECO:0007744" key="10">
    <source>
        <dbReference type="PDB" id="1MC2"/>
    </source>
</evidence>
<evidence type="ECO:0007744" key="11">
    <source>
        <dbReference type="PDB" id="1MG6"/>
    </source>
</evidence>
<evidence type="ECO:0007829" key="12">
    <source>
        <dbReference type="PDB" id="1MC2"/>
    </source>
</evidence>
<reference key="1">
    <citation type="journal article" date="1999" name="Genet. Anal.">
        <title>cDNA cloning and sequence analysis of Lys-49 phospholipase A2 from Agkistrodon acutus.</title>
        <authorList>
            <person name="Fan C.Y."/>
            <person name="Qian Y.C."/>
            <person name="Yang S.L."/>
            <person name="Gong Y."/>
        </authorList>
    </citation>
    <scope>NUCLEOTIDE SEQUENCE [MRNA]</scope>
    <source>
        <tissue>Venom gland</tissue>
    </source>
</reference>
<reference key="2">
    <citation type="journal article" date="2001" name="Arch. Biochem. Biophys.">
        <title>Purification, sequencing, and phylogenetic analyses of novel Lys-49 phospholipases A(2) from the venoms of rattlesnakes and other pit vipers.</title>
        <authorList>
            <person name="Tsai I.-H."/>
            <person name="Chen Y.-H."/>
            <person name="Wang Y.-M."/>
            <person name="Tu M.-C."/>
            <person name="Tu A.T."/>
        </authorList>
    </citation>
    <scope>NUCLEOTIDE SEQUENCE [MRNA]</scope>
    <source>
        <tissue>Venom gland</tissue>
    </source>
</reference>
<reference key="3">
    <citation type="journal article" date="2000" name="Acta Crystallogr. D">
        <title>Characterization, crystallization and preliminary X-ray diffraction analysis of acutohaemolysin, a haemolytic toxin from Agkistrodon acutus venom.</title>
        <authorList>
            <person name="Huang Q.-Q."/>
            <person name="Zhu X.-Y."/>
            <person name="Li N."/>
            <person name="Deng W.-H."/>
            <person name="Chen T.-B."/>
            <person name="Rao P.-F."/>
            <person name="Teng M.-K."/>
            <person name="Niu L.-W."/>
        </authorList>
    </citation>
    <scope>PROTEIN SEQUENCE OF 17-27</scope>
    <scope>SUBUNIT</scope>
    <scope>MASS SPECTROMETRY</scope>
    <scope>CRYSTALLIZATION</scope>
    <scope>SUBCELLULAR LOCATION</scope>
    <source>
        <tissue>Venom</tissue>
    </source>
</reference>
<reference key="4">
    <citation type="journal article" date="2003" name="J. Biol. Chem.">
        <title>The crystal structure of a novel, inactive, lysine 49 PLA2 from Agkistrodon acutus venom: an ultrahigh resolution, AB initio structure determination.</title>
        <authorList>
            <person name="Liu Q."/>
            <person name="Huang Q.-Q."/>
            <person name="Teng M.-K."/>
            <person name="Weeks C.M."/>
            <person name="Jelsch C."/>
            <person name="Zhang R."/>
            <person name="Niu L.-W."/>
        </authorList>
    </citation>
    <scope>X-RAY CRYSTALLOGRAPHY (0.85 ANGSTROMS) OF 17-138</scope>
    <scope>SUBUNIT</scope>
    <scope>DISULFIDE BONDS</scope>
    <source>
        <tissue>Venom</tissue>
    </source>
</reference>
<name>PA2H_DEIAC</name>
<accession>O57385</accession>
<accession>Q8UVZ5</accession>